<comment type="catalytic activity">
    <reaction evidence="1">
        <text>tRNA(Gly) + glycine + ATP = glycyl-tRNA(Gly) + AMP + diphosphate</text>
        <dbReference type="Rhea" id="RHEA:16013"/>
        <dbReference type="Rhea" id="RHEA-COMP:9664"/>
        <dbReference type="Rhea" id="RHEA-COMP:9683"/>
        <dbReference type="ChEBI" id="CHEBI:30616"/>
        <dbReference type="ChEBI" id="CHEBI:33019"/>
        <dbReference type="ChEBI" id="CHEBI:57305"/>
        <dbReference type="ChEBI" id="CHEBI:78442"/>
        <dbReference type="ChEBI" id="CHEBI:78522"/>
        <dbReference type="ChEBI" id="CHEBI:456215"/>
        <dbReference type="EC" id="6.1.1.14"/>
    </reaction>
</comment>
<comment type="subunit">
    <text evidence="1">Tetramer of two alpha and two beta subunits.</text>
</comment>
<comment type="subcellular location">
    <subcellularLocation>
        <location evidence="1">Cytoplasm</location>
    </subcellularLocation>
</comment>
<comment type="similarity">
    <text evidence="1">Belongs to the class-II aminoacyl-tRNA synthetase family.</text>
</comment>
<feature type="chain" id="PRO_1000006406" description="Glycine--tRNA ligase beta subunit">
    <location>
        <begin position="1"/>
        <end position="689"/>
    </location>
</feature>
<dbReference type="EC" id="6.1.1.14" evidence="1"/>
<dbReference type="EMBL" id="CP000681">
    <property type="protein sequence ID" value="ABP73742.1"/>
    <property type="molecule type" value="Genomic_DNA"/>
</dbReference>
<dbReference type="SMR" id="A4Y1A9"/>
<dbReference type="STRING" id="319224.Sputcn32_0006"/>
<dbReference type="KEGG" id="spc:Sputcn32_0006"/>
<dbReference type="eggNOG" id="COG0751">
    <property type="taxonomic scope" value="Bacteria"/>
</dbReference>
<dbReference type="HOGENOM" id="CLU_007220_2_2_6"/>
<dbReference type="GO" id="GO:0005829">
    <property type="term" value="C:cytosol"/>
    <property type="evidence" value="ECO:0007669"/>
    <property type="project" value="TreeGrafter"/>
</dbReference>
<dbReference type="GO" id="GO:0004814">
    <property type="term" value="F:arginine-tRNA ligase activity"/>
    <property type="evidence" value="ECO:0007669"/>
    <property type="project" value="InterPro"/>
</dbReference>
<dbReference type="GO" id="GO:0005524">
    <property type="term" value="F:ATP binding"/>
    <property type="evidence" value="ECO:0007669"/>
    <property type="project" value="UniProtKB-UniRule"/>
</dbReference>
<dbReference type="GO" id="GO:0004820">
    <property type="term" value="F:glycine-tRNA ligase activity"/>
    <property type="evidence" value="ECO:0007669"/>
    <property type="project" value="UniProtKB-UniRule"/>
</dbReference>
<dbReference type="GO" id="GO:0006420">
    <property type="term" value="P:arginyl-tRNA aminoacylation"/>
    <property type="evidence" value="ECO:0007669"/>
    <property type="project" value="InterPro"/>
</dbReference>
<dbReference type="GO" id="GO:0006426">
    <property type="term" value="P:glycyl-tRNA aminoacylation"/>
    <property type="evidence" value="ECO:0007669"/>
    <property type="project" value="UniProtKB-UniRule"/>
</dbReference>
<dbReference type="Gene3D" id="1.10.730.10">
    <property type="entry name" value="Isoleucyl-tRNA Synthetase, Domain 1"/>
    <property type="match status" value="1"/>
</dbReference>
<dbReference type="HAMAP" id="MF_00255">
    <property type="entry name" value="Gly_tRNA_synth_beta"/>
    <property type="match status" value="1"/>
</dbReference>
<dbReference type="InterPro" id="IPR008909">
    <property type="entry name" value="DALR_anticod-bd"/>
</dbReference>
<dbReference type="InterPro" id="IPR015944">
    <property type="entry name" value="Gly-tRNA-synth_bsu"/>
</dbReference>
<dbReference type="InterPro" id="IPR006194">
    <property type="entry name" value="Gly-tRNA-synth_heterodimer"/>
</dbReference>
<dbReference type="NCBIfam" id="TIGR00211">
    <property type="entry name" value="glyS"/>
    <property type="match status" value="1"/>
</dbReference>
<dbReference type="PANTHER" id="PTHR30075:SF2">
    <property type="entry name" value="GLYCINE--TRNA LIGASE, CHLOROPLASTIC_MITOCHONDRIAL 2"/>
    <property type="match status" value="1"/>
</dbReference>
<dbReference type="PANTHER" id="PTHR30075">
    <property type="entry name" value="GLYCYL-TRNA SYNTHETASE"/>
    <property type="match status" value="1"/>
</dbReference>
<dbReference type="Pfam" id="PF05746">
    <property type="entry name" value="DALR_1"/>
    <property type="match status" value="1"/>
</dbReference>
<dbReference type="Pfam" id="PF02092">
    <property type="entry name" value="tRNA_synt_2f"/>
    <property type="match status" value="1"/>
</dbReference>
<dbReference type="PRINTS" id="PR01045">
    <property type="entry name" value="TRNASYNTHGB"/>
</dbReference>
<dbReference type="SMART" id="SM00836">
    <property type="entry name" value="DALR_1"/>
    <property type="match status" value="1"/>
</dbReference>
<dbReference type="SUPFAM" id="SSF109604">
    <property type="entry name" value="HD-domain/PDEase-like"/>
    <property type="match status" value="1"/>
</dbReference>
<dbReference type="PROSITE" id="PS50861">
    <property type="entry name" value="AA_TRNA_LIGASE_II_GLYAB"/>
    <property type="match status" value="1"/>
</dbReference>
<keyword id="KW-0030">Aminoacyl-tRNA synthetase</keyword>
<keyword id="KW-0067">ATP-binding</keyword>
<keyword id="KW-0963">Cytoplasm</keyword>
<keyword id="KW-0436">Ligase</keyword>
<keyword id="KW-0547">Nucleotide-binding</keyword>
<keyword id="KW-0648">Protein biosynthesis</keyword>
<sequence length="689" mass="75096">MNFENLLIELGTEELPPKSLRKLAESFLANFTEELTKADLAFSSAVWYAAPRRLAINVTELALAQADKVVEKRGPAVSSAFDAEGKPTKAAEGWARGNGITVEQAERLVTDKGEWLVHNAKVEGVETKSLIAAMAQRALDKLPIPKPMRWGNNKTQFIRPVHTATILLGSELIEGELLGIKSARTVRGHRFMGLKQFELAHADHYLADLKEKGKVIADYESRKALIKADAEKAAAKIGGTADIEDSLLEEVASLVEWPVVLTASFEEKFLSVPSEALVYTMKGDQKYFPVFDNAGKLLPNFIFVANIESKDPAQIISGNEKVVRPRLADAEFFFNTDKKHTLESRLPSLETVLFQQQLGTLKDKVNRISALAAFIAEQTGANAVDAARAGLLSKTDLMTNMVMEFTDTQGTMGMHYARLDGETEAVAVAMEEQYKPKFSGDTVPSAGVSCAVALADKLDTLVGIFGIGQAPKGAADPFALRRAAIGVLRIIVENKLPLDLVTLIAKAQELHGTHLSNANASDEVLEFLMARFRAWYQDKGIGVDVILAVLARRPTRPADFDSRINAVSHFRSLEASGALAAANKRVSNILAKVEGALPTTIDASLLTEAAEQALAAKLNELQPQLAPLFANADYQQALTLLAGLRESVDQFFEDVMVMADDEALKNNRLALLNNLREQFLHVADISLLQ</sequence>
<name>SYGB_SHEPC</name>
<proteinExistence type="inferred from homology"/>
<reference key="1">
    <citation type="submission" date="2007-04" db="EMBL/GenBank/DDBJ databases">
        <title>Complete sequence of Shewanella putrefaciens CN-32.</title>
        <authorList>
            <consortium name="US DOE Joint Genome Institute"/>
            <person name="Copeland A."/>
            <person name="Lucas S."/>
            <person name="Lapidus A."/>
            <person name="Barry K."/>
            <person name="Detter J.C."/>
            <person name="Glavina del Rio T."/>
            <person name="Hammon N."/>
            <person name="Israni S."/>
            <person name="Dalin E."/>
            <person name="Tice H."/>
            <person name="Pitluck S."/>
            <person name="Chain P."/>
            <person name="Malfatti S."/>
            <person name="Shin M."/>
            <person name="Vergez L."/>
            <person name="Schmutz J."/>
            <person name="Larimer F."/>
            <person name="Land M."/>
            <person name="Hauser L."/>
            <person name="Kyrpides N."/>
            <person name="Mikhailova N."/>
            <person name="Romine M.F."/>
            <person name="Fredrickson J."/>
            <person name="Tiedje J."/>
            <person name="Richardson P."/>
        </authorList>
    </citation>
    <scope>NUCLEOTIDE SEQUENCE [LARGE SCALE GENOMIC DNA]</scope>
    <source>
        <strain>CN-32 / ATCC BAA-453</strain>
    </source>
</reference>
<accession>A4Y1A9</accession>
<protein>
    <recommendedName>
        <fullName evidence="1">Glycine--tRNA ligase beta subunit</fullName>
        <ecNumber evidence="1">6.1.1.14</ecNumber>
    </recommendedName>
    <alternativeName>
        <fullName evidence="1">Glycyl-tRNA synthetase beta subunit</fullName>
        <shortName evidence="1">GlyRS</shortName>
    </alternativeName>
</protein>
<gene>
    <name evidence="1" type="primary">glyS</name>
    <name type="ordered locus">Sputcn32_0006</name>
</gene>
<evidence type="ECO:0000255" key="1">
    <source>
        <dbReference type="HAMAP-Rule" id="MF_00255"/>
    </source>
</evidence>
<organism>
    <name type="scientific">Shewanella putrefaciens (strain CN-32 / ATCC BAA-453)</name>
    <dbReference type="NCBI Taxonomy" id="319224"/>
    <lineage>
        <taxon>Bacteria</taxon>
        <taxon>Pseudomonadati</taxon>
        <taxon>Pseudomonadota</taxon>
        <taxon>Gammaproteobacteria</taxon>
        <taxon>Alteromonadales</taxon>
        <taxon>Shewanellaceae</taxon>
        <taxon>Shewanella</taxon>
    </lineage>
</organism>